<evidence type="ECO:0000255" key="1">
    <source>
        <dbReference type="PROSITE-ProRule" id="PRU00074"/>
    </source>
</evidence>
<evidence type="ECO:0000255" key="2">
    <source>
        <dbReference type="PROSITE-ProRule" id="PRU01177"/>
    </source>
</evidence>
<evidence type="ECO:0000305" key="3">
    <source>
    </source>
</evidence>
<protein>
    <recommendedName>
        <fullName>Uncharacterized protein YuxH</fullName>
    </recommendedName>
</protein>
<gene>
    <name type="primary">yuxH</name>
    <name type="synonym">yufA</name>
    <name type="ordered locus">BSU31740</name>
</gene>
<comment type="caution">
    <text evidence="3">Was originally thought to be comB, a competence gene.</text>
</comment>
<organism>
    <name type="scientific">Bacillus subtilis (strain 168)</name>
    <dbReference type="NCBI Taxonomy" id="224308"/>
    <lineage>
        <taxon>Bacteria</taxon>
        <taxon>Bacillati</taxon>
        <taxon>Bacillota</taxon>
        <taxon>Bacilli</taxon>
        <taxon>Bacillales</taxon>
        <taxon>Bacillaceae</taxon>
        <taxon>Bacillus</taxon>
    </lineage>
</organism>
<proteinExistence type="predicted"/>
<name>YUXH_BACSU</name>
<accession>P14203</accession>
<sequence length="409" mass="47927">MRVFVARQPIFNRKEQVVAYELLYRESEENVYSAKDGDQATTDLVINSFLNIGIEKLTEGKRCFVNFTESLMFSNLPTSFNPKQLVIEILEDIPITPALISRCKELKKMGYMLALDDFYAINPQDEDLLEKLMSYIDILKIDFLKTTRMERRTILQTYGCRGLIFLAEKVETRKEYKQAVQDGFQLFQGYFFSEPRIISGHDLSTHFYSYYELLNELSKEQPNIKRVTEYIERDLSLSYQILKFLNSSHSRLSQKIESIQQAIMLLGFNEIKRWIYILSFKDLSRKGHSSKHEIIKISLIRAKLCELLARKTSRPQPASYMLIGMFSLIDTLLHREIEEIVQELPLKDEVGQALLGHQNDYYQMLELVKLIESNNWDTCSELGNQLDKEEAYECYLEALEWCHNLMDAK</sequence>
<feature type="chain" id="PRO_0000049927" description="Uncharacterized protein YuxH">
    <location>
        <begin position="1"/>
        <end position="409"/>
    </location>
</feature>
<feature type="domain" description="EAL" evidence="1">
    <location>
        <begin position="1"/>
        <end position="209"/>
    </location>
</feature>
<feature type="domain" description="HDOD" evidence="2">
    <location>
        <begin position="203"/>
        <end position="392"/>
    </location>
</feature>
<keyword id="KW-1185">Reference proteome</keyword>
<reference key="1">
    <citation type="journal article" date="1989" name="J. Bacteriol.">
        <title>Sequence and transcription mapping of Bacillus subtilis competence genes comB and comA, one of which is related to a family of bacterial regulatory determinants.</title>
        <authorList>
            <person name="Weinrauch Y."/>
            <person name="Guillen N."/>
            <person name="Dubnau D."/>
        </authorList>
    </citation>
    <scope>NUCLEOTIDE SEQUENCE [GENOMIC DNA]</scope>
</reference>
<reference key="2">
    <citation type="journal article" date="1997" name="Microbiology">
        <title>Analysis of the Bacillus subtilis genome: cloning and nucleotide sequence of a 62 kb region between 275 degrees (rrnB) and 284 degrees (pai).</title>
        <authorList>
            <person name="Oudega B."/>
            <person name="Koningstein G."/>
            <person name="Rodrigues L."/>
            <person name="de Sales Ramon M."/>
            <person name="Hilbert H."/>
            <person name="Duesterhoeft A."/>
            <person name="Pohl T.M."/>
            <person name="Weitzenegger T."/>
        </authorList>
    </citation>
    <scope>NUCLEOTIDE SEQUENCE [GENOMIC DNA]</scope>
    <source>
        <strain>168</strain>
    </source>
</reference>
<reference key="3">
    <citation type="journal article" date="1997" name="Nature">
        <title>The complete genome sequence of the Gram-positive bacterium Bacillus subtilis.</title>
        <authorList>
            <person name="Kunst F."/>
            <person name="Ogasawara N."/>
            <person name="Moszer I."/>
            <person name="Albertini A.M."/>
            <person name="Alloni G."/>
            <person name="Azevedo V."/>
            <person name="Bertero M.G."/>
            <person name="Bessieres P."/>
            <person name="Bolotin A."/>
            <person name="Borchert S."/>
            <person name="Borriss R."/>
            <person name="Boursier L."/>
            <person name="Brans A."/>
            <person name="Braun M."/>
            <person name="Brignell S.C."/>
            <person name="Bron S."/>
            <person name="Brouillet S."/>
            <person name="Bruschi C.V."/>
            <person name="Caldwell B."/>
            <person name="Capuano V."/>
            <person name="Carter N.M."/>
            <person name="Choi S.-K."/>
            <person name="Codani J.-J."/>
            <person name="Connerton I.F."/>
            <person name="Cummings N.J."/>
            <person name="Daniel R.A."/>
            <person name="Denizot F."/>
            <person name="Devine K.M."/>
            <person name="Duesterhoeft A."/>
            <person name="Ehrlich S.D."/>
            <person name="Emmerson P.T."/>
            <person name="Entian K.-D."/>
            <person name="Errington J."/>
            <person name="Fabret C."/>
            <person name="Ferrari E."/>
            <person name="Foulger D."/>
            <person name="Fritz C."/>
            <person name="Fujita M."/>
            <person name="Fujita Y."/>
            <person name="Fuma S."/>
            <person name="Galizzi A."/>
            <person name="Galleron N."/>
            <person name="Ghim S.-Y."/>
            <person name="Glaser P."/>
            <person name="Goffeau A."/>
            <person name="Golightly E.J."/>
            <person name="Grandi G."/>
            <person name="Guiseppi G."/>
            <person name="Guy B.J."/>
            <person name="Haga K."/>
            <person name="Haiech J."/>
            <person name="Harwood C.R."/>
            <person name="Henaut A."/>
            <person name="Hilbert H."/>
            <person name="Holsappel S."/>
            <person name="Hosono S."/>
            <person name="Hullo M.-F."/>
            <person name="Itaya M."/>
            <person name="Jones L.-M."/>
            <person name="Joris B."/>
            <person name="Karamata D."/>
            <person name="Kasahara Y."/>
            <person name="Klaerr-Blanchard M."/>
            <person name="Klein C."/>
            <person name="Kobayashi Y."/>
            <person name="Koetter P."/>
            <person name="Koningstein G."/>
            <person name="Krogh S."/>
            <person name="Kumano M."/>
            <person name="Kurita K."/>
            <person name="Lapidus A."/>
            <person name="Lardinois S."/>
            <person name="Lauber J."/>
            <person name="Lazarevic V."/>
            <person name="Lee S.-M."/>
            <person name="Levine A."/>
            <person name="Liu H."/>
            <person name="Masuda S."/>
            <person name="Mauel C."/>
            <person name="Medigue C."/>
            <person name="Medina N."/>
            <person name="Mellado R.P."/>
            <person name="Mizuno M."/>
            <person name="Moestl D."/>
            <person name="Nakai S."/>
            <person name="Noback M."/>
            <person name="Noone D."/>
            <person name="O'Reilly M."/>
            <person name="Ogawa K."/>
            <person name="Ogiwara A."/>
            <person name="Oudega B."/>
            <person name="Park S.-H."/>
            <person name="Parro V."/>
            <person name="Pohl T.M."/>
            <person name="Portetelle D."/>
            <person name="Porwollik S."/>
            <person name="Prescott A.M."/>
            <person name="Presecan E."/>
            <person name="Pujic P."/>
            <person name="Purnelle B."/>
            <person name="Rapoport G."/>
            <person name="Rey M."/>
            <person name="Reynolds S."/>
            <person name="Rieger M."/>
            <person name="Rivolta C."/>
            <person name="Rocha E."/>
            <person name="Roche B."/>
            <person name="Rose M."/>
            <person name="Sadaie Y."/>
            <person name="Sato T."/>
            <person name="Scanlan E."/>
            <person name="Schleich S."/>
            <person name="Schroeter R."/>
            <person name="Scoffone F."/>
            <person name="Sekiguchi J."/>
            <person name="Sekowska A."/>
            <person name="Seror S.J."/>
            <person name="Serror P."/>
            <person name="Shin B.-S."/>
            <person name="Soldo B."/>
            <person name="Sorokin A."/>
            <person name="Tacconi E."/>
            <person name="Takagi T."/>
            <person name="Takahashi H."/>
            <person name="Takemaru K."/>
            <person name="Takeuchi M."/>
            <person name="Tamakoshi A."/>
            <person name="Tanaka T."/>
            <person name="Terpstra P."/>
            <person name="Tognoni A."/>
            <person name="Tosato V."/>
            <person name="Uchiyama S."/>
            <person name="Vandenbol M."/>
            <person name="Vannier F."/>
            <person name="Vassarotti A."/>
            <person name="Viari A."/>
            <person name="Wambutt R."/>
            <person name="Wedler E."/>
            <person name="Wedler H."/>
            <person name="Weitzenegger T."/>
            <person name="Winters P."/>
            <person name="Wipat A."/>
            <person name="Yamamoto H."/>
            <person name="Yamane K."/>
            <person name="Yasumoto K."/>
            <person name="Yata K."/>
            <person name="Yoshida K."/>
            <person name="Yoshikawa H.-F."/>
            <person name="Zumstein E."/>
            <person name="Yoshikawa H."/>
            <person name="Danchin A."/>
        </authorList>
    </citation>
    <scope>NUCLEOTIDE SEQUENCE [LARGE SCALE GENOMIC DNA]</scope>
    <source>
        <strain>168</strain>
    </source>
</reference>
<reference key="4">
    <citation type="journal article" date="1991" name="Microbiol. Rev.">
        <title>Genetic competence in Bacillus subtilis.</title>
        <authorList>
            <person name="Dubnau D."/>
        </authorList>
    </citation>
    <scope>SHOWS THAT THIS IS NOT COMB</scope>
</reference>
<dbReference type="EMBL" id="AH000865">
    <property type="protein sequence ID" value="AAA22318.1"/>
    <property type="molecule type" value="Genomic_DNA"/>
</dbReference>
<dbReference type="EMBL" id="Z93932">
    <property type="protein sequence ID" value="CAB07900.1"/>
    <property type="molecule type" value="Genomic_DNA"/>
</dbReference>
<dbReference type="EMBL" id="AL009126">
    <property type="protein sequence ID" value="CAB15162.1"/>
    <property type="molecule type" value="Genomic_DNA"/>
</dbReference>
<dbReference type="PIR" id="C33591">
    <property type="entry name" value="BVBSCB"/>
</dbReference>
<dbReference type="SMR" id="P14203"/>
<dbReference type="FunCoup" id="P14203">
    <property type="interactions" value="17"/>
</dbReference>
<dbReference type="STRING" id="224308.BSU31740"/>
<dbReference type="PaxDb" id="224308-BSU31740"/>
<dbReference type="EnsemblBacteria" id="CAB15162">
    <property type="protein sequence ID" value="CAB15162"/>
    <property type="gene ID" value="BSU_31740"/>
</dbReference>
<dbReference type="GeneID" id="937185"/>
<dbReference type="KEGG" id="bsu:BSU31740"/>
<dbReference type="PATRIC" id="fig|224308.179.peg.3440"/>
<dbReference type="eggNOG" id="COG3434">
    <property type="taxonomic scope" value="Bacteria"/>
</dbReference>
<dbReference type="InParanoid" id="P14203"/>
<dbReference type="OrthoDB" id="9804751at2"/>
<dbReference type="BioCyc" id="BSUB:BSU31740-MONOMER"/>
<dbReference type="Proteomes" id="UP000001570">
    <property type="component" value="Chromosome"/>
</dbReference>
<dbReference type="Gene3D" id="3.20.20.450">
    <property type="entry name" value="EAL domain"/>
    <property type="match status" value="1"/>
</dbReference>
<dbReference type="Gene3D" id="1.10.3210.10">
    <property type="entry name" value="Hypothetical protein af1432"/>
    <property type="match status" value="1"/>
</dbReference>
<dbReference type="InterPro" id="IPR014408">
    <property type="entry name" value="dGMP_Pdiesterase_EAL/HD-GYP"/>
</dbReference>
<dbReference type="InterPro" id="IPR001633">
    <property type="entry name" value="EAL_dom"/>
</dbReference>
<dbReference type="InterPro" id="IPR035919">
    <property type="entry name" value="EAL_sf"/>
</dbReference>
<dbReference type="InterPro" id="IPR013976">
    <property type="entry name" value="HDOD"/>
</dbReference>
<dbReference type="InterPro" id="IPR052340">
    <property type="entry name" value="RNase_Y/CdgJ"/>
</dbReference>
<dbReference type="PANTHER" id="PTHR33525">
    <property type="match status" value="1"/>
</dbReference>
<dbReference type="PANTHER" id="PTHR33525:SF4">
    <property type="entry name" value="CYCLIC DI-GMP PHOSPHODIESTERASE CDGJ"/>
    <property type="match status" value="1"/>
</dbReference>
<dbReference type="Pfam" id="PF00563">
    <property type="entry name" value="EAL"/>
    <property type="match status" value="1"/>
</dbReference>
<dbReference type="Pfam" id="PF08668">
    <property type="entry name" value="HDOD"/>
    <property type="match status" value="1"/>
</dbReference>
<dbReference type="PIRSF" id="PIRSF003180">
    <property type="entry name" value="DiGMPpdiest_YuxH"/>
    <property type="match status" value="1"/>
</dbReference>
<dbReference type="SMART" id="SM00052">
    <property type="entry name" value="EAL"/>
    <property type="match status" value="1"/>
</dbReference>
<dbReference type="SUPFAM" id="SSF141868">
    <property type="entry name" value="EAL domain-like"/>
    <property type="match status" value="1"/>
</dbReference>
<dbReference type="SUPFAM" id="SSF109604">
    <property type="entry name" value="HD-domain/PDEase-like"/>
    <property type="match status" value="1"/>
</dbReference>
<dbReference type="PROSITE" id="PS50883">
    <property type="entry name" value="EAL"/>
    <property type="match status" value="1"/>
</dbReference>
<dbReference type="PROSITE" id="PS51833">
    <property type="entry name" value="HDOD"/>
    <property type="match status" value="1"/>
</dbReference>